<proteinExistence type="inferred from homology"/>
<feature type="chain" id="PRO_1000050953" description="UDP-3-O-acylglucosamine N-acyltransferase">
    <location>
        <begin position="1"/>
        <end position="351"/>
    </location>
</feature>
<feature type="active site" description="Proton acceptor" evidence="1">
    <location>
        <position position="240"/>
    </location>
</feature>
<name>LPXD_ECTM1</name>
<organism>
    <name type="scientific">Ectopseudomonas mendocina (strain ymp)</name>
    <name type="common">Pseudomonas mendocina</name>
    <dbReference type="NCBI Taxonomy" id="399739"/>
    <lineage>
        <taxon>Bacteria</taxon>
        <taxon>Pseudomonadati</taxon>
        <taxon>Pseudomonadota</taxon>
        <taxon>Gammaproteobacteria</taxon>
        <taxon>Pseudomonadales</taxon>
        <taxon>Pseudomonadaceae</taxon>
        <taxon>Ectopseudomonas</taxon>
    </lineage>
</organism>
<dbReference type="EC" id="2.3.1.191" evidence="1"/>
<dbReference type="EMBL" id="CP000680">
    <property type="protein sequence ID" value="ABP85797.1"/>
    <property type="molecule type" value="Genomic_DNA"/>
</dbReference>
<dbReference type="SMR" id="A4XWT1"/>
<dbReference type="STRING" id="399739.Pmen_3043"/>
<dbReference type="KEGG" id="pmy:Pmen_3043"/>
<dbReference type="PATRIC" id="fig|399739.8.peg.3089"/>
<dbReference type="eggNOG" id="COG1044">
    <property type="taxonomic scope" value="Bacteria"/>
</dbReference>
<dbReference type="HOGENOM" id="CLU_049865_0_1_6"/>
<dbReference type="UniPathway" id="UPA00973"/>
<dbReference type="GO" id="GO:0016020">
    <property type="term" value="C:membrane"/>
    <property type="evidence" value="ECO:0007669"/>
    <property type="project" value="GOC"/>
</dbReference>
<dbReference type="GO" id="GO:0016410">
    <property type="term" value="F:N-acyltransferase activity"/>
    <property type="evidence" value="ECO:0007669"/>
    <property type="project" value="InterPro"/>
</dbReference>
<dbReference type="GO" id="GO:0009245">
    <property type="term" value="P:lipid A biosynthetic process"/>
    <property type="evidence" value="ECO:0007669"/>
    <property type="project" value="UniProtKB-UniRule"/>
</dbReference>
<dbReference type="CDD" id="cd03352">
    <property type="entry name" value="LbH_LpxD"/>
    <property type="match status" value="1"/>
</dbReference>
<dbReference type="Gene3D" id="1.20.5.170">
    <property type="match status" value="1"/>
</dbReference>
<dbReference type="Gene3D" id="2.160.10.10">
    <property type="entry name" value="Hexapeptide repeat proteins"/>
    <property type="match status" value="1"/>
</dbReference>
<dbReference type="Gene3D" id="3.40.1390.10">
    <property type="entry name" value="MurE/MurF, N-terminal domain"/>
    <property type="match status" value="1"/>
</dbReference>
<dbReference type="HAMAP" id="MF_00523">
    <property type="entry name" value="LpxD"/>
    <property type="match status" value="1"/>
</dbReference>
<dbReference type="InterPro" id="IPR001451">
    <property type="entry name" value="Hexapep"/>
</dbReference>
<dbReference type="InterPro" id="IPR007691">
    <property type="entry name" value="LpxD"/>
</dbReference>
<dbReference type="InterPro" id="IPR011004">
    <property type="entry name" value="Trimer_LpxA-like_sf"/>
</dbReference>
<dbReference type="InterPro" id="IPR020573">
    <property type="entry name" value="UDP_GlcNAc_AcTrfase_non-rep"/>
</dbReference>
<dbReference type="NCBIfam" id="TIGR01853">
    <property type="entry name" value="lipid_A_lpxD"/>
    <property type="match status" value="1"/>
</dbReference>
<dbReference type="NCBIfam" id="NF002060">
    <property type="entry name" value="PRK00892.1"/>
    <property type="match status" value="1"/>
</dbReference>
<dbReference type="PANTHER" id="PTHR43378">
    <property type="entry name" value="UDP-3-O-ACYLGLUCOSAMINE N-ACYLTRANSFERASE"/>
    <property type="match status" value="1"/>
</dbReference>
<dbReference type="PANTHER" id="PTHR43378:SF2">
    <property type="entry name" value="UDP-3-O-ACYLGLUCOSAMINE N-ACYLTRANSFERASE 1, MITOCHONDRIAL-RELATED"/>
    <property type="match status" value="1"/>
</dbReference>
<dbReference type="Pfam" id="PF00132">
    <property type="entry name" value="Hexapep"/>
    <property type="match status" value="1"/>
</dbReference>
<dbReference type="Pfam" id="PF04613">
    <property type="entry name" value="LpxD"/>
    <property type="match status" value="1"/>
</dbReference>
<dbReference type="SUPFAM" id="SSF51161">
    <property type="entry name" value="Trimeric LpxA-like enzymes"/>
    <property type="match status" value="1"/>
</dbReference>
<dbReference type="PROSITE" id="PS00101">
    <property type="entry name" value="HEXAPEP_TRANSFERASES"/>
    <property type="match status" value="1"/>
</dbReference>
<protein>
    <recommendedName>
        <fullName evidence="1">UDP-3-O-acylglucosamine N-acyltransferase</fullName>
        <ecNumber evidence="1">2.3.1.191</ecNumber>
    </recommendedName>
</protein>
<accession>A4XWT1</accession>
<evidence type="ECO:0000255" key="1">
    <source>
        <dbReference type="HAMAP-Rule" id="MF_00523"/>
    </source>
</evidence>
<keyword id="KW-0012">Acyltransferase</keyword>
<keyword id="KW-0441">Lipid A biosynthesis</keyword>
<keyword id="KW-0444">Lipid biosynthesis</keyword>
<keyword id="KW-0443">Lipid metabolism</keyword>
<keyword id="KW-0677">Repeat</keyword>
<keyword id="KW-0808">Transferase</keyword>
<reference key="1">
    <citation type="submission" date="2007-04" db="EMBL/GenBank/DDBJ databases">
        <title>Complete sequence of Pseudomonas mendocina ymp.</title>
        <authorList>
            <consortium name="US DOE Joint Genome Institute"/>
            <person name="Copeland A."/>
            <person name="Lucas S."/>
            <person name="Lapidus A."/>
            <person name="Barry K."/>
            <person name="Glavina del Rio T."/>
            <person name="Dalin E."/>
            <person name="Tice H."/>
            <person name="Pitluck S."/>
            <person name="Kiss H."/>
            <person name="Brettin T."/>
            <person name="Detter J.C."/>
            <person name="Bruce D."/>
            <person name="Han C."/>
            <person name="Schmutz J."/>
            <person name="Larimer F."/>
            <person name="Land M."/>
            <person name="Hauser L."/>
            <person name="Kyrpides N."/>
            <person name="Mikhailova N."/>
            <person name="Hersman L."/>
            <person name="Dubois J."/>
            <person name="Maurice P."/>
            <person name="Richardson P."/>
        </authorList>
    </citation>
    <scope>NUCLEOTIDE SEQUENCE [LARGE SCALE GENOMIC DNA]</scope>
    <source>
        <strain>ymp</strain>
    </source>
</reference>
<comment type="function">
    <text evidence="1">Catalyzes the N-acylation of UDP-3-O-acylglucosamine using 3-hydroxyacyl-ACP as the acyl donor. Is involved in the biosynthesis of lipid A, a phosphorylated glycolipid that anchors the lipopolysaccharide to the outer membrane of the cell.</text>
</comment>
<comment type="catalytic activity">
    <reaction evidence="1">
        <text>a UDP-3-O-[(3R)-3-hydroxyacyl]-alpha-D-glucosamine + a (3R)-hydroxyacyl-[ACP] = a UDP-2-N,3-O-bis[(3R)-3-hydroxyacyl]-alpha-D-glucosamine + holo-[ACP] + H(+)</text>
        <dbReference type="Rhea" id="RHEA:53836"/>
        <dbReference type="Rhea" id="RHEA-COMP:9685"/>
        <dbReference type="Rhea" id="RHEA-COMP:9945"/>
        <dbReference type="ChEBI" id="CHEBI:15378"/>
        <dbReference type="ChEBI" id="CHEBI:64479"/>
        <dbReference type="ChEBI" id="CHEBI:78827"/>
        <dbReference type="ChEBI" id="CHEBI:137740"/>
        <dbReference type="ChEBI" id="CHEBI:137748"/>
        <dbReference type="EC" id="2.3.1.191"/>
    </reaction>
</comment>
<comment type="pathway">
    <text evidence="1">Bacterial outer membrane biogenesis; LPS lipid A biosynthesis.</text>
</comment>
<comment type="subunit">
    <text evidence="1">Homotrimer.</text>
</comment>
<comment type="similarity">
    <text evidence="1">Belongs to the transferase hexapeptide repeat family. LpxD subfamily.</text>
</comment>
<gene>
    <name evidence="1" type="primary">lpxD</name>
    <name type="ordered locus">Pmen_3043</name>
</gene>
<sequence>MSATFTLGQLAERLGATLRGAEAKVITGLATLQEARPEQLSFLANAQYRKFLAQTQAGAVLLSAADAEGYAGDALIVANPYLAYAQLSHLFDRKPKAAPGIHATAQVADDAQVDPSASVGPYAVIESGARIGAEVSIGAHCVVGARSVIGDGGWLAPRVTLYHDVQIGKRVVIQSGAVIGGEGFGFANEKGVWQKIAQIGGVTIGDDVEIGANTTIDRGALSDTLIGNGVKLDNQIMIAHNVQVGDNTAMAGCCGISGSTKIGKNCMIAGGVGMVGHIEVCDNVFVTGMTMVTRSITEPGAYSSGTAMQPAGEWKKSAARIRQLDEMAKRLRELEKQLAAVTQTANVSSDA</sequence>